<accession>Q5FM22</accession>
<reference key="1">
    <citation type="journal article" date="2005" name="Proc. Natl. Acad. Sci. U.S.A.">
        <title>Complete genome sequence of the probiotic lactic acid bacterium Lactobacillus acidophilus NCFM.</title>
        <authorList>
            <person name="Altermann E."/>
            <person name="Russell W.M."/>
            <person name="Azcarate-Peril M.A."/>
            <person name="Barrangou R."/>
            <person name="Buck B.L."/>
            <person name="McAuliffe O."/>
            <person name="Souther N."/>
            <person name="Dobson A."/>
            <person name="Duong T."/>
            <person name="Callanan M."/>
            <person name="Lick S."/>
            <person name="Hamrick A."/>
            <person name="Cano R."/>
            <person name="Klaenhammer T.R."/>
        </authorList>
    </citation>
    <scope>NUCLEOTIDE SEQUENCE [LARGE SCALE GENOMIC DNA]</scope>
    <source>
        <strain>ATCC 700396 / NCK56 / N2 / NCFM</strain>
    </source>
</reference>
<proteinExistence type="inferred from homology"/>
<name>RL1_LACAC</name>
<organism>
    <name type="scientific">Lactobacillus acidophilus (strain ATCC 700396 / NCK56 / N2 / NCFM)</name>
    <dbReference type="NCBI Taxonomy" id="272621"/>
    <lineage>
        <taxon>Bacteria</taxon>
        <taxon>Bacillati</taxon>
        <taxon>Bacillota</taxon>
        <taxon>Bacilli</taxon>
        <taxon>Lactobacillales</taxon>
        <taxon>Lactobacillaceae</taxon>
        <taxon>Lactobacillus</taxon>
    </lineage>
</organism>
<evidence type="ECO:0000255" key="1">
    <source>
        <dbReference type="HAMAP-Rule" id="MF_01318"/>
    </source>
</evidence>
<evidence type="ECO:0000305" key="2"/>
<comment type="function">
    <text evidence="1">Binds directly to 23S rRNA. The L1 stalk is quite mobile in the ribosome, and is involved in E site tRNA release.</text>
</comment>
<comment type="function">
    <text evidence="1">Protein L1 is also a translational repressor protein, it controls the translation of the L11 operon by binding to its mRNA.</text>
</comment>
<comment type="subunit">
    <text evidence="1">Part of the 50S ribosomal subunit.</text>
</comment>
<comment type="similarity">
    <text evidence="1">Belongs to the universal ribosomal protein uL1 family.</text>
</comment>
<dbReference type="EMBL" id="CP000033">
    <property type="protein sequence ID" value="AAV42252.1"/>
    <property type="molecule type" value="Genomic_DNA"/>
</dbReference>
<dbReference type="RefSeq" id="WP_003549096.1">
    <property type="nucleotide sequence ID" value="NC_006814.3"/>
</dbReference>
<dbReference type="RefSeq" id="YP_193283.1">
    <property type="nucleotide sequence ID" value="NC_006814.3"/>
</dbReference>
<dbReference type="SMR" id="Q5FM22"/>
<dbReference type="STRING" id="272621.LBA0360"/>
<dbReference type="GeneID" id="93290540"/>
<dbReference type="KEGG" id="lac:LBA0360"/>
<dbReference type="PATRIC" id="fig|272621.13.peg.347"/>
<dbReference type="eggNOG" id="COG0081">
    <property type="taxonomic scope" value="Bacteria"/>
</dbReference>
<dbReference type="HOGENOM" id="CLU_062853_0_0_9"/>
<dbReference type="OrthoDB" id="9803740at2"/>
<dbReference type="BioCyc" id="LACI272621:G1G49-355-MONOMER"/>
<dbReference type="Proteomes" id="UP000006381">
    <property type="component" value="Chromosome"/>
</dbReference>
<dbReference type="GO" id="GO:0015934">
    <property type="term" value="C:large ribosomal subunit"/>
    <property type="evidence" value="ECO:0007669"/>
    <property type="project" value="InterPro"/>
</dbReference>
<dbReference type="GO" id="GO:0019843">
    <property type="term" value="F:rRNA binding"/>
    <property type="evidence" value="ECO:0007669"/>
    <property type="project" value="UniProtKB-UniRule"/>
</dbReference>
<dbReference type="GO" id="GO:0003735">
    <property type="term" value="F:structural constituent of ribosome"/>
    <property type="evidence" value="ECO:0007669"/>
    <property type="project" value="InterPro"/>
</dbReference>
<dbReference type="GO" id="GO:0000049">
    <property type="term" value="F:tRNA binding"/>
    <property type="evidence" value="ECO:0007669"/>
    <property type="project" value="UniProtKB-KW"/>
</dbReference>
<dbReference type="GO" id="GO:0006417">
    <property type="term" value="P:regulation of translation"/>
    <property type="evidence" value="ECO:0007669"/>
    <property type="project" value="UniProtKB-KW"/>
</dbReference>
<dbReference type="GO" id="GO:0006412">
    <property type="term" value="P:translation"/>
    <property type="evidence" value="ECO:0007669"/>
    <property type="project" value="UniProtKB-UniRule"/>
</dbReference>
<dbReference type="CDD" id="cd00403">
    <property type="entry name" value="Ribosomal_L1"/>
    <property type="match status" value="1"/>
</dbReference>
<dbReference type="FunFam" id="3.40.50.790:FF:000001">
    <property type="entry name" value="50S ribosomal protein L1"/>
    <property type="match status" value="1"/>
</dbReference>
<dbReference type="Gene3D" id="3.30.190.20">
    <property type="match status" value="1"/>
</dbReference>
<dbReference type="Gene3D" id="3.40.50.790">
    <property type="match status" value="1"/>
</dbReference>
<dbReference type="HAMAP" id="MF_01318_B">
    <property type="entry name" value="Ribosomal_uL1_B"/>
    <property type="match status" value="1"/>
</dbReference>
<dbReference type="InterPro" id="IPR005878">
    <property type="entry name" value="Ribosom_uL1_bac-type"/>
</dbReference>
<dbReference type="InterPro" id="IPR002143">
    <property type="entry name" value="Ribosomal_uL1"/>
</dbReference>
<dbReference type="InterPro" id="IPR023674">
    <property type="entry name" value="Ribosomal_uL1-like"/>
</dbReference>
<dbReference type="InterPro" id="IPR028364">
    <property type="entry name" value="Ribosomal_uL1/biogenesis"/>
</dbReference>
<dbReference type="InterPro" id="IPR016095">
    <property type="entry name" value="Ribosomal_uL1_3-a/b-sand"/>
</dbReference>
<dbReference type="InterPro" id="IPR023673">
    <property type="entry name" value="Ribosomal_uL1_CS"/>
</dbReference>
<dbReference type="NCBIfam" id="TIGR01169">
    <property type="entry name" value="rplA_bact"/>
    <property type="match status" value="1"/>
</dbReference>
<dbReference type="PANTHER" id="PTHR36427">
    <property type="entry name" value="54S RIBOSOMAL PROTEIN L1, MITOCHONDRIAL"/>
    <property type="match status" value="1"/>
</dbReference>
<dbReference type="PANTHER" id="PTHR36427:SF3">
    <property type="entry name" value="LARGE RIBOSOMAL SUBUNIT PROTEIN UL1M"/>
    <property type="match status" value="1"/>
</dbReference>
<dbReference type="Pfam" id="PF00687">
    <property type="entry name" value="Ribosomal_L1"/>
    <property type="match status" value="1"/>
</dbReference>
<dbReference type="PIRSF" id="PIRSF002155">
    <property type="entry name" value="Ribosomal_L1"/>
    <property type="match status" value="1"/>
</dbReference>
<dbReference type="SUPFAM" id="SSF56808">
    <property type="entry name" value="Ribosomal protein L1"/>
    <property type="match status" value="1"/>
</dbReference>
<dbReference type="PROSITE" id="PS01199">
    <property type="entry name" value="RIBOSOMAL_L1"/>
    <property type="match status" value="1"/>
</dbReference>
<gene>
    <name evidence="1" type="primary">rplA</name>
    <name type="ordered locus">LBA0360</name>
</gene>
<protein>
    <recommendedName>
        <fullName evidence="1">Large ribosomal subunit protein uL1</fullName>
    </recommendedName>
    <alternativeName>
        <fullName evidence="2">50S ribosomal protein L1</fullName>
    </alternativeName>
</protein>
<keyword id="KW-1185">Reference proteome</keyword>
<keyword id="KW-0678">Repressor</keyword>
<keyword id="KW-0687">Ribonucleoprotein</keyword>
<keyword id="KW-0689">Ribosomal protein</keyword>
<keyword id="KW-0694">RNA-binding</keyword>
<keyword id="KW-0699">rRNA-binding</keyword>
<keyword id="KW-0810">Translation regulation</keyword>
<keyword id="KW-0820">tRNA-binding</keyword>
<sequence>MPKHGKKYLDAAKKVDSNKLYSVAEAMKLVKETSYANFDATIDVAYNLSVDPKQADQQIRGSIVLPNGTGKTQTVVVFAEGPQAEQAKAAGADFVGSDDLVEKIQGGWLDFDVVVATPMMMAKVGRLGRVLGPKGLMPNPKTGTVTMDIEKAVKNVKAGQVEYRVDRQAAIHTPIGKVSFTEDQLVENFDALRDVILRARPASAKGQYIKSVAVSATFGPGIKLDPLNLD</sequence>
<feature type="chain" id="PRO_0000230611" description="Large ribosomal subunit protein uL1">
    <location>
        <begin position="1"/>
        <end position="230"/>
    </location>
</feature>